<protein>
    <recommendedName>
        <fullName evidence="1">Glutamate--tRNA ligase 1</fullName>
        <ecNumber evidence="1">6.1.1.17</ecNumber>
    </recommendedName>
    <alternativeName>
        <fullName evidence="1">Glutamyl-tRNA synthetase 1</fullName>
        <shortName evidence="1">GluRS 1</shortName>
    </alternativeName>
</protein>
<organism>
    <name type="scientific">Rickettsia typhi (strain ATCC VR-144 / Wilmington)</name>
    <dbReference type="NCBI Taxonomy" id="257363"/>
    <lineage>
        <taxon>Bacteria</taxon>
        <taxon>Pseudomonadati</taxon>
        <taxon>Pseudomonadota</taxon>
        <taxon>Alphaproteobacteria</taxon>
        <taxon>Rickettsiales</taxon>
        <taxon>Rickettsiaceae</taxon>
        <taxon>Rickettsieae</taxon>
        <taxon>Rickettsia</taxon>
        <taxon>typhus group</taxon>
    </lineage>
</organism>
<gene>
    <name evidence="1" type="primary">gltX1</name>
    <name type="ordered locus">RT0316</name>
</gene>
<reference key="1">
    <citation type="journal article" date="2004" name="J. Bacteriol.">
        <title>Complete genome sequence of Rickettsia typhi and comparison with sequences of other Rickettsiae.</title>
        <authorList>
            <person name="McLeod M.P."/>
            <person name="Qin X."/>
            <person name="Karpathy S.E."/>
            <person name="Gioia J."/>
            <person name="Highlander S.K."/>
            <person name="Fox G.E."/>
            <person name="McNeill T.Z."/>
            <person name="Jiang H."/>
            <person name="Muzny D."/>
            <person name="Jacob L.S."/>
            <person name="Hawes A.C."/>
            <person name="Sodergren E."/>
            <person name="Gill R."/>
            <person name="Hume J."/>
            <person name="Morgan M."/>
            <person name="Fan G."/>
            <person name="Amin A.G."/>
            <person name="Gibbs R.A."/>
            <person name="Hong C."/>
            <person name="Yu X.-J."/>
            <person name="Walker D.H."/>
            <person name="Weinstock G.M."/>
        </authorList>
    </citation>
    <scope>NUCLEOTIDE SEQUENCE [LARGE SCALE GENOMIC DNA]</scope>
    <source>
        <strain>ATCC VR-144 / Wilmington</strain>
    </source>
</reference>
<proteinExistence type="inferred from homology"/>
<name>SYE1_RICTY</name>
<comment type="function">
    <text evidence="1">Catalyzes the attachment of glutamate to tRNA(Glu) in a two-step reaction: glutamate is first activated by ATP to form Glu-AMP and then transferred to the acceptor end of tRNA(Glu).</text>
</comment>
<comment type="catalytic activity">
    <reaction evidence="1">
        <text>tRNA(Glu) + L-glutamate + ATP = L-glutamyl-tRNA(Glu) + AMP + diphosphate</text>
        <dbReference type="Rhea" id="RHEA:23540"/>
        <dbReference type="Rhea" id="RHEA-COMP:9663"/>
        <dbReference type="Rhea" id="RHEA-COMP:9680"/>
        <dbReference type="ChEBI" id="CHEBI:29985"/>
        <dbReference type="ChEBI" id="CHEBI:30616"/>
        <dbReference type="ChEBI" id="CHEBI:33019"/>
        <dbReference type="ChEBI" id="CHEBI:78442"/>
        <dbReference type="ChEBI" id="CHEBI:78520"/>
        <dbReference type="ChEBI" id="CHEBI:456215"/>
        <dbReference type="EC" id="6.1.1.17"/>
    </reaction>
</comment>
<comment type="subunit">
    <text evidence="1">Monomer.</text>
</comment>
<comment type="subcellular location">
    <subcellularLocation>
        <location evidence="1">Cytoplasm</location>
    </subcellularLocation>
</comment>
<comment type="similarity">
    <text evidence="1">Belongs to the class-I aminoacyl-tRNA synthetase family. Glutamate--tRNA ligase type 1 subfamily.</text>
</comment>
<dbReference type="EC" id="6.1.1.17" evidence="1"/>
<dbReference type="EMBL" id="AE017197">
    <property type="protein sequence ID" value="AAU03796.1"/>
    <property type="molecule type" value="Genomic_DNA"/>
</dbReference>
<dbReference type="SMR" id="Q68X46"/>
<dbReference type="KEGG" id="rty:RT0316"/>
<dbReference type="eggNOG" id="COG0008">
    <property type="taxonomic scope" value="Bacteria"/>
</dbReference>
<dbReference type="HOGENOM" id="CLU_015768_6_1_5"/>
<dbReference type="OrthoDB" id="9807503at2"/>
<dbReference type="Proteomes" id="UP000000604">
    <property type="component" value="Chromosome"/>
</dbReference>
<dbReference type="GO" id="GO:0005737">
    <property type="term" value="C:cytoplasm"/>
    <property type="evidence" value="ECO:0007669"/>
    <property type="project" value="UniProtKB-SubCell"/>
</dbReference>
<dbReference type="GO" id="GO:0005524">
    <property type="term" value="F:ATP binding"/>
    <property type="evidence" value="ECO:0007669"/>
    <property type="project" value="UniProtKB-UniRule"/>
</dbReference>
<dbReference type="GO" id="GO:0004818">
    <property type="term" value="F:glutamate-tRNA ligase activity"/>
    <property type="evidence" value="ECO:0007669"/>
    <property type="project" value="UniProtKB-UniRule"/>
</dbReference>
<dbReference type="GO" id="GO:0000049">
    <property type="term" value="F:tRNA binding"/>
    <property type="evidence" value="ECO:0007669"/>
    <property type="project" value="InterPro"/>
</dbReference>
<dbReference type="GO" id="GO:0006424">
    <property type="term" value="P:glutamyl-tRNA aminoacylation"/>
    <property type="evidence" value="ECO:0007669"/>
    <property type="project" value="UniProtKB-UniRule"/>
</dbReference>
<dbReference type="Gene3D" id="1.10.10.350">
    <property type="match status" value="1"/>
</dbReference>
<dbReference type="Gene3D" id="3.40.50.620">
    <property type="entry name" value="HUPs"/>
    <property type="match status" value="1"/>
</dbReference>
<dbReference type="HAMAP" id="MF_00022">
    <property type="entry name" value="Glu_tRNA_synth_type1"/>
    <property type="match status" value="1"/>
</dbReference>
<dbReference type="InterPro" id="IPR045462">
    <property type="entry name" value="aa-tRNA-synth_I_cd-bd"/>
</dbReference>
<dbReference type="InterPro" id="IPR020751">
    <property type="entry name" value="aa-tRNA-synth_I_codon-bd_sub2"/>
</dbReference>
<dbReference type="InterPro" id="IPR001412">
    <property type="entry name" value="aa-tRNA-synth_I_CS"/>
</dbReference>
<dbReference type="InterPro" id="IPR008925">
    <property type="entry name" value="aa_tRNA-synth_I_cd-bd_sf"/>
</dbReference>
<dbReference type="InterPro" id="IPR004527">
    <property type="entry name" value="Glu-tRNA-ligase_bac/mito"/>
</dbReference>
<dbReference type="InterPro" id="IPR000924">
    <property type="entry name" value="Glu/Gln-tRNA-synth"/>
</dbReference>
<dbReference type="InterPro" id="IPR020058">
    <property type="entry name" value="Glu/Gln-tRNA-synth_Ib_cat-dom"/>
</dbReference>
<dbReference type="InterPro" id="IPR049940">
    <property type="entry name" value="GluQ/Sye"/>
</dbReference>
<dbReference type="InterPro" id="IPR014729">
    <property type="entry name" value="Rossmann-like_a/b/a_fold"/>
</dbReference>
<dbReference type="NCBIfam" id="TIGR00464">
    <property type="entry name" value="gltX_bact"/>
    <property type="match status" value="1"/>
</dbReference>
<dbReference type="PANTHER" id="PTHR43311">
    <property type="entry name" value="GLUTAMATE--TRNA LIGASE"/>
    <property type="match status" value="1"/>
</dbReference>
<dbReference type="PANTHER" id="PTHR43311:SF2">
    <property type="entry name" value="GLUTAMATE--TRNA LIGASE, MITOCHONDRIAL-RELATED"/>
    <property type="match status" value="1"/>
</dbReference>
<dbReference type="Pfam" id="PF19269">
    <property type="entry name" value="Anticodon_2"/>
    <property type="match status" value="1"/>
</dbReference>
<dbReference type="Pfam" id="PF00749">
    <property type="entry name" value="tRNA-synt_1c"/>
    <property type="match status" value="1"/>
</dbReference>
<dbReference type="PRINTS" id="PR00987">
    <property type="entry name" value="TRNASYNTHGLU"/>
</dbReference>
<dbReference type="SUPFAM" id="SSF48163">
    <property type="entry name" value="An anticodon-binding domain of class I aminoacyl-tRNA synthetases"/>
    <property type="match status" value="1"/>
</dbReference>
<dbReference type="SUPFAM" id="SSF52374">
    <property type="entry name" value="Nucleotidylyl transferase"/>
    <property type="match status" value="1"/>
</dbReference>
<dbReference type="PROSITE" id="PS00178">
    <property type="entry name" value="AA_TRNA_LIGASE_I"/>
    <property type="match status" value="1"/>
</dbReference>
<evidence type="ECO:0000255" key="1">
    <source>
        <dbReference type="HAMAP-Rule" id="MF_00022"/>
    </source>
</evidence>
<accession>Q68X46</accession>
<feature type="chain" id="PRO_0000119642" description="Glutamate--tRNA ligase 1">
    <location>
        <begin position="1"/>
        <end position="448"/>
    </location>
</feature>
<feature type="short sequence motif" description="'HIGH' region" evidence="1">
    <location>
        <begin position="10"/>
        <end position="20"/>
    </location>
</feature>
<feature type="short sequence motif" description="'KMSKS' region" evidence="1">
    <location>
        <begin position="240"/>
        <end position="244"/>
    </location>
</feature>
<feature type="binding site" evidence="1">
    <location>
        <position position="243"/>
    </location>
    <ligand>
        <name>ATP</name>
        <dbReference type="ChEBI" id="CHEBI:30616"/>
    </ligand>
</feature>
<sequence length="448" mass="52196">MTKVITRFAPSPTGMLHVGNIRVALLNWLYAKKHNGKFILRFDDTDLERSKQKYKNDIERDLKFLNINCDQIFNQLSRVSRYNEIKNLLINKKRLYACYETTEELELKRKFRLSKGLPPIYDRASLNLTEKQIQKYIEQGRKPHYRFFLNDEPISWYDMIKGDIKYNGKALSDPIVIRADGSMTYMLCSVIDDIDYDITHIIRGEDHVSNTAIQIQMFEALNKIPPVFAHLSLIINKEEKISKRVGGFEIAYLKNEVGLEAMTITSFFSLLGSSLHIFPYKSIEKLVAQFEISSFSKSPTIYQQYDLERLNHKLLISLDYHEVKERLKEINADYIDENFWLSVRANLQKLSDIKDWWDICYQTPKIGNLNLDKEYLKQASELLPLGKITKDSWSIWTKEITNATGRKGKELFLPIRLALTGRKSGPEIAGILPLLKREEIIKRLVAIT</sequence>
<keyword id="KW-0030">Aminoacyl-tRNA synthetase</keyword>
<keyword id="KW-0067">ATP-binding</keyword>
<keyword id="KW-0963">Cytoplasm</keyword>
<keyword id="KW-0436">Ligase</keyword>
<keyword id="KW-0547">Nucleotide-binding</keyword>
<keyword id="KW-0648">Protein biosynthesis</keyword>